<protein>
    <recommendedName>
        <fullName evidence="1">Cyanate hydratase</fullName>
        <shortName evidence="1">Cyanase</shortName>
        <ecNumber evidence="1">4.2.1.104</ecNumber>
    </recommendedName>
    <alternativeName>
        <fullName evidence="1">Cyanate hydrolase</fullName>
    </alternativeName>
    <alternativeName>
        <fullName evidence="1">Cyanate lyase</fullName>
    </alternativeName>
</protein>
<organism>
    <name type="scientific">Burkholderia vietnamiensis (strain G4 / LMG 22486)</name>
    <name type="common">Burkholderia cepacia (strain R1808)</name>
    <dbReference type="NCBI Taxonomy" id="269482"/>
    <lineage>
        <taxon>Bacteria</taxon>
        <taxon>Pseudomonadati</taxon>
        <taxon>Pseudomonadota</taxon>
        <taxon>Betaproteobacteria</taxon>
        <taxon>Burkholderiales</taxon>
        <taxon>Burkholderiaceae</taxon>
        <taxon>Burkholderia</taxon>
        <taxon>Burkholderia cepacia complex</taxon>
    </lineage>
</organism>
<gene>
    <name evidence="1" type="primary">cynS</name>
    <name type="ordered locus">Bcep1808_6046</name>
</gene>
<reference key="1">
    <citation type="submission" date="2007-03" db="EMBL/GenBank/DDBJ databases">
        <title>Complete sequence of chromosome 3 of Burkholderia vietnamiensis G4.</title>
        <authorList>
            <consortium name="US DOE Joint Genome Institute"/>
            <person name="Copeland A."/>
            <person name="Lucas S."/>
            <person name="Lapidus A."/>
            <person name="Barry K."/>
            <person name="Detter J.C."/>
            <person name="Glavina del Rio T."/>
            <person name="Hammon N."/>
            <person name="Israni S."/>
            <person name="Dalin E."/>
            <person name="Tice H."/>
            <person name="Pitluck S."/>
            <person name="Chain P."/>
            <person name="Malfatti S."/>
            <person name="Shin M."/>
            <person name="Vergez L."/>
            <person name="Schmutz J."/>
            <person name="Larimer F."/>
            <person name="Land M."/>
            <person name="Hauser L."/>
            <person name="Kyrpides N."/>
            <person name="Tiedje J."/>
            <person name="Richardson P."/>
        </authorList>
    </citation>
    <scope>NUCLEOTIDE SEQUENCE [LARGE SCALE GENOMIC DNA]</scope>
    <source>
        <strain>G4 / LMG 22486</strain>
    </source>
</reference>
<name>CYNS_BURVG</name>
<accession>A4JRR6</accession>
<sequence>MTQSQVTPNAREALTETIVDAKVRKNLTFEAINEGTGLSLAYTTAALLGQHALPENAAKLVAERLGLDDGAVRLLQTIPVRGSTPGGVPTDPTVYRFYEMVQVYGSTLKALVHEKFGDGIISAINFKLDIQKVPDPEGGERAVITLNGKYLPTKPF</sequence>
<dbReference type="EC" id="4.2.1.104" evidence="1"/>
<dbReference type="EMBL" id="CP000616">
    <property type="protein sequence ID" value="ABO58969.1"/>
    <property type="molecule type" value="Genomic_DNA"/>
</dbReference>
<dbReference type="SMR" id="A4JRR6"/>
<dbReference type="KEGG" id="bvi:Bcep1808_6046"/>
<dbReference type="eggNOG" id="COG1513">
    <property type="taxonomic scope" value="Bacteria"/>
</dbReference>
<dbReference type="HOGENOM" id="CLU_103452_1_1_4"/>
<dbReference type="Proteomes" id="UP000002287">
    <property type="component" value="Chromosome 3"/>
</dbReference>
<dbReference type="GO" id="GO:0008824">
    <property type="term" value="F:cyanate hydratase activity"/>
    <property type="evidence" value="ECO:0007669"/>
    <property type="project" value="UniProtKB-UniRule"/>
</dbReference>
<dbReference type="GO" id="GO:0003677">
    <property type="term" value="F:DNA binding"/>
    <property type="evidence" value="ECO:0007669"/>
    <property type="project" value="InterPro"/>
</dbReference>
<dbReference type="GO" id="GO:0009439">
    <property type="term" value="P:cyanate metabolic process"/>
    <property type="evidence" value="ECO:0007669"/>
    <property type="project" value="UniProtKB-UniRule"/>
</dbReference>
<dbReference type="CDD" id="cd00559">
    <property type="entry name" value="Cyanase_C"/>
    <property type="match status" value="1"/>
</dbReference>
<dbReference type="Gene3D" id="3.30.1160.10">
    <property type="entry name" value="Cyanate lyase, C-terminal domain"/>
    <property type="match status" value="1"/>
</dbReference>
<dbReference type="Gene3D" id="1.10.260.40">
    <property type="entry name" value="lambda repressor-like DNA-binding domains"/>
    <property type="match status" value="1"/>
</dbReference>
<dbReference type="HAMAP" id="MF_00535">
    <property type="entry name" value="Cyanate_hydrat"/>
    <property type="match status" value="1"/>
</dbReference>
<dbReference type="InterPro" id="IPR008076">
    <property type="entry name" value="Cyanase"/>
</dbReference>
<dbReference type="InterPro" id="IPR003712">
    <property type="entry name" value="Cyanate_lyase_C"/>
</dbReference>
<dbReference type="InterPro" id="IPR036581">
    <property type="entry name" value="Cyanate_lyase_C_sf"/>
</dbReference>
<dbReference type="InterPro" id="IPR048564">
    <property type="entry name" value="CYNS_N"/>
</dbReference>
<dbReference type="InterPro" id="IPR010982">
    <property type="entry name" value="Lambda_DNA-bd_dom_sf"/>
</dbReference>
<dbReference type="NCBIfam" id="TIGR00673">
    <property type="entry name" value="cynS"/>
    <property type="match status" value="1"/>
</dbReference>
<dbReference type="NCBIfam" id="NF002773">
    <property type="entry name" value="PRK02866.1"/>
    <property type="match status" value="1"/>
</dbReference>
<dbReference type="PANTHER" id="PTHR34186">
    <property type="entry name" value="CYANATE HYDRATASE"/>
    <property type="match status" value="1"/>
</dbReference>
<dbReference type="PANTHER" id="PTHR34186:SF2">
    <property type="entry name" value="CYANATE HYDRATASE"/>
    <property type="match status" value="1"/>
</dbReference>
<dbReference type="Pfam" id="PF02560">
    <property type="entry name" value="Cyanate_lyase"/>
    <property type="match status" value="1"/>
</dbReference>
<dbReference type="Pfam" id="PF21291">
    <property type="entry name" value="CYNS_N"/>
    <property type="match status" value="1"/>
</dbReference>
<dbReference type="PIRSF" id="PIRSF001263">
    <property type="entry name" value="Cyanate_hydratas"/>
    <property type="match status" value="1"/>
</dbReference>
<dbReference type="PRINTS" id="PR01693">
    <property type="entry name" value="CYANASE"/>
</dbReference>
<dbReference type="SMART" id="SM01116">
    <property type="entry name" value="Cyanate_lyase"/>
    <property type="match status" value="1"/>
</dbReference>
<dbReference type="SUPFAM" id="SSF55234">
    <property type="entry name" value="Cyanase C-terminal domain"/>
    <property type="match status" value="1"/>
</dbReference>
<dbReference type="SUPFAM" id="SSF47413">
    <property type="entry name" value="lambda repressor-like DNA-binding domains"/>
    <property type="match status" value="1"/>
</dbReference>
<comment type="function">
    <text evidence="1">Catalyzes the reaction of cyanate with bicarbonate to produce ammonia and carbon dioxide.</text>
</comment>
<comment type="catalytic activity">
    <reaction evidence="1">
        <text>cyanate + hydrogencarbonate + 3 H(+) = NH4(+) + 2 CO2</text>
        <dbReference type="Rhea" id="RHEA:11120"/>
        <dbReference type="ChEBI" id="CHEBI:15378"/>
        <dbReference type="ChEBI" id="CHEBI:16526"/>
        <dbReference type="ChEBI" id="CHEBI:17544"/>
        <dbReference type="ChEBI" id="CHEBI:28938"/>
        <dbReference type="ChEBI" id="CHEBI:29195"/>
        <dbReference type="EC" id="4.2.1.104"/>
    </reaction>
</comment>
<comment type="similarity">
    <text evidence="1">Belongs to the cyanase family.</text>
</comment>
<evidence type="ECO:0000255" key="1">
    <source>
        <dbReference type="HAMAP-Rule" id="MF_00535"/>
    </source>
</evidence>
<proteinExistence type="inferred from homology"/>
<feature type="chain" id="PRO_1000051476" description="Cyanate hydratase">
    <location>
        <begin position="1"/>
        <end position="156"/>
    </location>
</feature>
<feature type="active site" evidence="1">
    <location>
        <position position="96"/>
    </location>
</feature>
<feature type="active site" evidence="1">
    <location>
        <position position="99"/>
    </location>
</feature>
<feature type="active site" evidence="1">
    <location>
        <position position="122"/>
    </location>
</feature>
<keyword id="KW-0456">Lyase</keyword>